<keyword id="KW-0963">Cytoplasm</keyword>
<keyword id="KW-0342">GTP-binding</keyword>
<keyword id="KW-0436">Ligase</keyword>
<keyword id="KW-0460">Magnesium</keyword>
<keyword id="KW-0479">Metal-binding</keyword>
<keyword id="KW-0547">Nucleotide-binding</keyword>
<keyword id="KW-0658">Purine biosynthesis</keyword>
<evidence type="ECO:0000255" key="1">
    <source>
        <dbReference type="HAMAP-Rule" id="MF_00011"/>
    </source>
</evidence>
<sequence length="428" mass="47393">MSAFIVLGAQWGDEGKGKMTDYLAEEAEVVVRFQGGNNAGHTVEVGDKQYKLHLIPSGILYDDKLNVIGNGVVVDPKALFEEINYLEGVGVKVTPEKLIISDRAQLIMPYHKTLDVLKEKARGKNDIGTTGKGIGPCYTDKFERCGIRVCDLMHEDVFKEKLEENIRMKNEYITKVLGGEPLSFSEILNEYLEFAKKLRPFVQDTSVKVYDNIKENKTVLFEGAQGMLLDIDYGTYPYVTSSNTTAGGVCSGIGVGPNMVTNAVGITKAYTTRVGKGPFPTELIDETGDWIREKGHEYGVTTGRSRRCGWLDLVIVKTAARVSGLTSLAVTKIDTLAGLEKLKVCVGYKFDGKVIDYFPASLEDLAKCEPVYEDFDGWDDSVAEARTYEELPENAKKYLNRIAEFTDTKISIIGVGPKREQTIRIDSI</sequence>
<feature type="chain" id="PRO_1000089278" description="Adenylosuccinate synthetase">
    <location>
        <begin position="1"/>
        <end position="428"/>
    </location>
</feature>
<feature type="active site" description="Proton acceptor" evidence="1">
    <location>
        <position position="13"/>
    </location>
</feature>
<feature type="active site" description="Proton donor" evidence="1">
    <location>
        <position position="41"/>
    </location>
</feature>
<feature type="binding site" evidence="1">
    <location>
        <begin position="12"/>
        <end position="18"/>
    </location>
    <ligand>
        <name>GTP</name>
        <dbReference type="ChEBI" id="CHEBI:37565"/>
    </ligand>
</feature>
<feature type="binding site" description="in other chain" evidence="1">
    <location>
        <begin position="13"/>
        <end position="16"/>
    </location>
    <ligand>
        <name>IMP</name>
        <dbReference type="ChEBI" id="CHEBI:58053"/>
        <note>ligand shared between dimeric partners</note>
    </ligand>
</feature>
<feature type="binding site" evidence="1">
    <location>
        <position position="13"/>
    </location>
    <ligand>
        <name>Mg(2+)</name>
        <dbReference type="ChEBI" id="CHEBI:18420"/>
    </ligand>
</feature>
<feature type="binding site" description="in other chain" evidence="1">
    <location>
        <begin position="38"/>
        <end position="41"/>
    </location>
    <ligand>
        <name>IMP</name>
        <dbReference type="ChEBI" id="CHEBI:58053"/>
        <note>ligand shared between dimeric partners</note>
    </ligand>
</feature>
<feature type="binding site" evidence="1">
    <location>
        <begin position="40"/>
        <end position="42"/>
    </location>
    <ligand>
        <name>GTP</name>
        <dbReference type="ChEBI" id="CHEBI:37565"/>
    </ligand>
</feature>
<feature type="binding site" evidence="1">
    <location>
        <position position="40"/>
    </location>
    <ligand>
        <name>Mg(2+)</name>
        <dbReference type="ChEBI" id="CHEBI:18420"/>
    </ligand>
</feature>
<feature type="binding site" description="in other chain" evidence="1">
    <location>
        <position position="130"/>
    </location>
    <ligand>
        <name>IMP</name>
        <dbReference type="ChEBI" id="CHEBI:58053"/>
        <note>ligand shared between dimeric partners</note>
    </ligand>
</feature>
<feature type="binding site" evidence="1">
    <location>
        <position position="144"/>
    </location>
    <ligand>
        <name>IMP</name>
        <dbReference type="ChEBI" id="CHEBI:58053"/>
        <note>ligand shared between dimeric partners</note>
    </ligand>
</feature>
<feature type="binding site" description="in other chain" evidence="1">
    <location>
        <position position="225"/>
    </location>
    <ligand>
        <name>IMP</name>
        <dbReference type="ChEBI" id="CHEBI:58053"/>
        <note>ligand shared between dimeric partners</note>
    </ligand>
</feature>
<feature type="binding site" description="in other chain" evidence="1">
    <location>
        <position position="240"/>
    </location>
    <ligand>
        <name>IMP</name>
        <dbReference type="ChEBI" id="CHEBI:58053"/>
        <note>ligand shared between dimeric partners</note>
    </ligand>
</feature>
<feature type="binding site" evidence="1">
    <location>
        <begin position="300"/>
        <end position="306"/>
    </location>
    <ligand>
        <name>substrate</name>
    </ligand>
</feature>
<feature type="binding site" description="in other chain" evidence="1">
    <location>
        <position position="304"/>
    </location>
    <ligand>
        <name>IMP</name>
        <dbReference type="ChEBI" id="CHEBI:58053"/>
        <note>ligand shared between dimeric partners</note>
    </ligand>
</feature>
<feature type="binding site" evidence="1">
    <location>
        <position position="306"/>
    </location>
    <ligand>
        <name>GTP</name>
        <dbReference type="ChEBI" id="CHEBI:37565"/>
    </ligand>
</feature>
<feature type="binding site" evidence="1">
    <location>
        <begin position="332"/>
        <end position="334"/>
    </location>
    <ligand>
        <name>GTP</name>
        <dbReference type="ChEBI" id="CHEBI:37565"/>
    </ligand>
</feature>
<feature type="binding site" evidence="1">
    <location>
        <begin position="414"/>
        <end position="416"/>
    </location>
    <ligand>
        <name>GTP</name>
        <dbReference type="ChEBI" id="CHEBI:37565"/>
    </ligand>
</feature>
<name>PURA_CLOBA</name>
<comment type="function">
    <text evidence="1">Plays an important role in the de novo pathway of purine nucleotide biosynthesis. Catalyzes the first committed step in the biosynthesis of AMP from IMP.</text>
</comment>
<comment type="catalytic activity">
    <reaction evidence="1">
        <text>IMP + L-aspartate + GTP = N(6)-(1,2-dicarboxyethyl)-AMP + GDP + phosphate + 2 H(+)</text>
        <dbReference type="Rhea" id="RHEA:15753"/>
        <dbReference type="ChEBI" id="CHEBI:15378"/>
        <dbReference type="ChEBI" id="CHEBI:29991"/>
        <dbReference type="ChEBI" id="CHEBI:37565"/>
        <dbReference type="ChEBI" id="CHEBI:43474"/>
        <dbReference type="ChEBI" id="CHEBI:57567"/>
        <dbReference type="ChEBI" id="CHEBI:58053"/>
        <dbReference type="ChEBI" id="CHEBI:58189"/>
        <dbReference type="EC" id="6.3.4.4"/>
    </reaction>
</comment>
<comment type="cofactor">
    <cofactor evidence="1">
        <name>Mg(2+)</name>
        <dbReference type="ChEBI" id="CHEBI:18420"/>
    </cofactor>
    <text evidence="1">Binds 1 Mg(2+) ion per subunit.</text>
</comment>
<comment type="pathway">
    <text evidence="1">Purine metabolism; AMP biosynthesis via de novo pathway; AMP from IMP: step 1/2.</text>
</comment>
<comment type="subunit">
    <text evidence="1">Homodimer.</text>
</comment>
<comment type="subcellular location">
    <subcellularLocation>
        <location evidence="1">Cytoplasm</location>
    </subcellularLocation>
</comment>
<comment type="similarity">
    <text evidence="1">Belongs to the adenylosuccinate synthetase family.</text>
</comment>
<reference key="1">
    <citation type="submission" date="2008-05" db="EMBL/GenBank/DDBJ databases">
        <title>Complete genome sequence of Clostridium botulinum E3 str. Alaska E43.</title>
        <authorList>
            <person name="Brinkac L.M."/>
            <person name="Brown J.L."/>
            <person name="Bruce D."/>
            <person name="Detter C."/>
            <person name="Munk C."/>
            <person name="Smith L.A."/>
            <person name="Smith T.J."/>
            <person name="Sutton G."/>
            <person name="Brettin T.S."/>
        </authorList>
    </citation>
    <scope>NUCLEOTIDE SEQUENCE [LARGE SCALE GENOMIC DNA]</scope>
    <source>
        <strain>Alaska E43 / Type E3</strain>
    </source>
</reference>
<gene>
    <name evidence="1" type="primary">purA</name>
    <name type="ordered locus">CLH_3370</name>
</gene>
<protein>
    <recommendedName>
        <fullName evidence="1">Adenylosuccinate synthetase</fullName>
        <shortName evidence="1">AMPSase</shortName>
        <shortName evidence="1">AdSS</shortName>
        <ecNumber evidence="1">6.3.4.4</ecNumber>
    </recommendedName>
    <alternativeName>
        <fullName evidence="1">IMP--aspartate ligase</fullName>
    </alternativeName>
</protein>
<organism>
    <name type="scientific">Clostridium botulinum (strain Alaska E43 / Type E3)</name>
    <dbReference type="NCBI Taxonomy" id="508767"/>
    <lineage>
        <taxon>Bacteria</taxon>
        <taxon>Bacillati</taxon>
        <taxon>Bacillota</taxon>
        <taxon>Clostridia</taxon>
        <taxon>Eubacteriales</taxon>
        <taxon>Clostridiaceae</taxon>
        <taxon>Clostridium</taxon>
    </lineage>
</organism>
<proteinExistence type="inferred from homology"/>
<accession>B2V1S6</accession>
<dbReference type="EC" id="6.3.4.4" evidence="1"/>
<dbReference type="EMBL" id="CP001078">
    <property type="protein sequence ID" value="ACD53708.1"/>
    <property type="molecule type" value="Genomic_DNA"/>
</dbReference>
<dbReference type="RefSeq" id="WP_012451558.1">
    <property type="nucleotide sequence ID" value="NC_010723.1"/>
</dbReference>
<dbReference type="SMR" id="B2V1S6"/>
<dbReference type="KEGG" id="cbt:CLH_3370"/>
<dbReference type="HOGENOM" id="CLU_029848_0_0_9"/>
<dbReference type="UniPathway" id="UPA00075">
    <property type="reaction ID" value="UER00335"/>
</dbReference>
<dbReference type="GO" id="GO:0005737">
    <property type="term" value="C:cytoplasm"/>
    <property type="evidence" value="ECO:0007669"/>
    <property type="project" value="UniProtKB-SubCell"/>
</dbReference>
<dbReference type="GO" id="GO:0004019">
    <property type="term" value="F:adenylosuccinate synthase activity"/>
    <property type="evidence" value="ECO:0007669"/>
    <property type="project" value="UniProtKB-UniRule"/>
</dbReference>
<dbReference type="GO" id="GO:0005525">
    <property type="term" value="F:GTP binding"/>
    <property type="evidence" value="ECO:0007669"/>
    <property type="project" value="UniProtKB-UniRule"/>
</dbReference>
<dbReference type="GO" id="GO:0000287">
    <property type="term" value="F:magnesium ion binding"/>
    <property type="evidence" value="ECO:0007669"/>
    <property type="project" value="UniProtKB-UniRule"/>
</dbReference>
<dbReference type="GO" id="GO:0044208">
    <property type="term" value="P:'de novo' AMP biosynthetic process"/>
    <property type="evidence" value="ECO:0007669"/>
    <property type="project" value="UniProtKB-UniRule"/>
</dbReference>
<dbReference type="GO" id="GO:0046040">
    <property type="term" value="P:IMP metabolic process"/>
    <property type="evidence" value="ECO:0007669"/>
    <property type="project" value="TreeGrafter"/>
</dbReference>
<dbReference type="CDD" id="cd03108">
    <property type="entry name" value="AdSS"/>
    <property type="match status" value="1"/>
</dbReference>
<dbReference type="FunFam" id="1.10.300.10:FF:000001">
    <property type="entry name" value="Adenylosuccinate synthetase"/>
    <property type="match status" value="1"/>
</dbReference>
<dbReference type="FunFam" id="3.90.170.10:FF:000001">
    <property type="entry name" value="Adenylosuccinate synthetase"/>
    <property type="match status" value="1"/>
</dbReference>
<dbReference type="Gene3D" id="3.40.440.10">
    <property type="entry name" value="Adenylosuccinate Synthetase, subunit A, domain 1"/>
    <property type="match status" value="1"/>
</dbReference>
<dbReference type="Gene3D" id="1.10.300.10">
    <property type="entry name" value="Adenylosuccinate Synthetase, subunit A, domain 2"/>
    <property type="match status" value="1"/>
</dbReference>
<dbReference type="Gene3D" id="3.90.170.10">
    <property type="entry name" value="Adenylosuccinate Synthetase, subunit A, domain 3"/>
    <property type="match status" value="1"/>
</dbReference>
<dbReference type="HAMAP" id="MF_00011">
    <property type="entry name" value="Adenylosucc_synth"/>
    <property type="match status" value="1"/>
</dbReference>
<dbReference type="InterPro" id="IPR018220">
    <property type="entry name" value="Adenylosuccin_syn_GTP-bd"/>
</dbReference>
<dbReference type="InterPro" id="IPR033128">
    <property type="entry name" value="Adenylosuccin_syn_Lys_AS"/>
</dbReference>
<dbReference type="InterPro" id="IPR042109">
    <property type="entry name" value="Adenylosuccinate_synth_dom1"/>
</dbReference>
<dbReference type="InterPro" id="IPR042110">
    <property type="entry name" value="Adenylosuccinate_synth_dom2"/>
</dbReference>
<dbReference type="InterPro" id="IPR042111">
    <property type="entry name" value="Adenylosuccinate_synth_dom3"/>
</dbReference>
<dbReference type="InterPro" id="IPR001114">
    <property type="entry name" value="Adenylosuccinate_synthetase"/>
</dbReference>
<dbReference type="InterPro" id="IPR027417">
    <property type="entry name" value="P-loop_NTPase"/>
</dbReference>
<dbReference type="NCBIfam" id="NF002223">
    <property type="entry name" value="PRK01117.1"/>
    <property type="match status" value="1"/>
</dbReference>
<dbReference type="NCBIfam" id="TIGR00184">
    <property type="entry name" value="purA"/>
    <property type="match status" value="1"/>
</dbReference>
<dbReference type="PANTHER" id="PTHR11846">
    <property type="entry name" value="ADENYLOSUCCINATE SYNTHETASE"/>
    <property type="match status" value="1"/>
</dbReference>
<dbReference type="PANTHER" id="PTHR11846:SF0">
    <property type="entry name" value="ADENYLOSUCCINATE SYNTHETASE"/>
    <property type="match status" value="1"/>
</dbReference>
<dbReference type="Pfam" id="PF00709">
    <property type="entry name" value="Adenylsucc_synt"/>
    <property type="match status" value="1"/>
</dbReference>
<dbReference type="SMART" id="SM00788">
    <property type="entry name" value="Adenylsucc_synt"/>
    <property type="match status" value="1"/>
</dbReference>
<dbReference type="SUPFAM" id="SSF52540">
    <property type="entry name" value="P-loop containing nucleoside triphosphate hydrolases"/>
    <property type="match status" value="1"/>
</dbReference>
<dbReference type="PROSITE" id="PS01266">
    <property type="entry name" value="ADENYLOSUCCIN_SYN_1"/>
    <property type="match status" value="1"/>
</dbReference>
<dbReference type="PROSITE" id="PS00513">
    <property type="entry name" value="ADENYLOSUCCIN_SYN_2"/>
    <property type="match status" value="1"/>
</dbReference>